<proteinExistence type="inferred from homology"/>
<protein>
    <recommendedName>
        <fullName evidence="1">Inositol 2-dehydrogenase/D-chiro-inositol 3-dehydrogenase</fullName>
        <ecNumber evidence="1">1.1.1.18</ecNumber>
        <ecNumber evidence="1">1.1.1.369</ecNumber>
    </recommendedName>
    <alternativeName>
        <fullName evidence="1">Myo-inositol 2-dehydrogenase/D-chiro-inositol 3-dehydrogenase</fullName>
        <shortName evidence="1">MI 2-dehydrogenase/DCI 3-dehydrogenase</shortName>
    </alternativeName>
</protein>
<reference key="1">
    <citation type="journal article" date="2004" name="J. Mol. Microbiol. Biotechnol.">
        <title>The complete genome sequence of Bacillus licheniformis DSM13, an organism with great industrial potential.</title>
        <authorList>
            <person name="Veith B."/>
            <person name="Herzberg C."/>
            <person name="Steckel S."/>
            <person name="Feesche J."/>
            <person name="Maurer K.H."/>
            <person name="Ehrenreich P."/>
            <person name="Baeumer S."/>
            <person name="Henne A."/>
            <person name="Liesegang H."/>
            <person name="Merkl R."/>
            <person name="Ehrenreich A."/>
            <person name="Gottschalk G."/>
        </authorList>
    </citation>
    <scope>NUCLEOTIDE SEQUENCE [LARGE SCALE GENOMIC DNA]</scope>
    <source>
        <strain>ATCC 14580 / DSM 13 / JCM 2505 / CCUG 7422 / NBRC 12200 / NCIMB 9375 / NCTC 10341 / NRRL NRS-1264 / Gibson 46</strain>
    </source>
</reference>
<reference key="2">
    <citation type="journal article" date="2004" name="Genome Biol.">
        <title>Complete genome sequence of the industrial bacterium Bacillus licheniformis and comparisons with closely related Bacillus species.</title>
        <authorList>
            <person name="Rey M.W."/>
            <person name="Ramaiya P."/>
            <person name="Nelson B.A."/>
            <person name="Brody-Karpin S.D."/>
            <person name="Zaretsky E.J."/>
            <person name="Tang M."/>
            <person name="Lopez de Leon A."/>
            <person name="Xiang H."/>
            <person name="Gusti V."/>
            <person name="Clausen I.G."/>
            <person name="Olsen P.B."/>
            <person name="Rasmussen M.D."/>
            <person name="Andersen J.T."/>
            <person name="Joergensen P.L."/>
            <person name="Larsen T.S."/>
            <person name="Sorokin A."/>
            <person name="Bolotin A."/>
            <person name="Lapidus A."/>
            <person name="Galleron N."/>
            <person name="Ehrlich S.D."/>
            <person name="Berka R.M."/>
        </authorList>
    </citation>
    <scope>NUCLEOTIDE SEQUENCE [LARGE SCALE GENOMIC DNA]</scope>
    <source>
        <strain>ATCC 14580 / DSM 13 / JCM 2505 / CCUG 7422 / NBRC 12200 / NCIMB 9375 / NCTC 10341 / NRRL NRS-1264 / Gibson 46</strain>
    </source>
</reference>
<evidence type="ECO:0000255" key="1">
    <source>
        <dbReference type="HAMAP-Rule" id="MF_01671"/>
    </source>
</evidence>
<dbReference type="EC" id="1.1.1.18" evidence="1"/>
<dbReference type="EC" id="1.1.1.369" evidence="1"/>
<dbReference type="EMBL" id="CP000002">
    <property type="protein sequence ID" value="AAU25679.1"/>
    <property type="molecule type" value="Genomic_DNA"/>
</dbReference>
<dbReference type="EMBL" id="AE017333">
    <property type="protein sequence ID" value="AAU43058.1"/>
    <property type="molecule type" value="Genomic_DNA"/>
</dbReference>
<dbReference type="RefSeq" id="WP_003177810.1">
    <property type="nucleotide sequence ID" value="NC_006322.1"/>
</dbReference>
<dbReference type="SMR" id="Q65D06"/>
<dbReference type="STRING" id="279010.BL00240"/>
<dbReference type="KEGG" id="bld:BLi04245"/>
<dbReference type="KEGG" id="bli:BL00240"/>
<dbReference type="PATRIC" id="fig|279010.13.peg.4329"/>
<dbReference type="eggNOG" id="COG0673">
    <property type="taxonomic scope" value="Bacteria"/>
</dbReference>
<dbReference type="HOGENOM" id="CLU_023194_0_1_9"/>
<dbReference type="UniPathway" id="UPA00076">
    <property type="reaction ID" value="UER00143"/>
</dbReference>
<dbReference type="Proteomes" id="UP000000606">
    <property type="component" value="Chromosome"/>
</dbReference>
<dbReference type="GO" id="GO:0050112">
    <property type="term" value="F:inositol 2-dehydrogenase (NAD+) activity"/>
    <property type="evidence" value="ECO:0007669"/>
    <property type="project" value="UniProtKB-UniRule"/>
</dbReference>
<dbReference type="GO" id="GO:0000166">
    <property type="term" value="F:nucleotide binding"/>
    <property type="evidence" value="ECO:0007669"/>
    <property type="project" value="InterPro"/>
</dbReference>
<dbReference type="GO" id="GO:0019310">
    <property type="term" value="P:inositol catabolic process"/>
    <property type="evidence" value="ECO:0007669"/>
    <property type="project" value="UniProtKB-UniRule"/>
</dbReference>
<dbReference type="Gene3D" id="3.30.360.10">
    <property type="entry name" value="Dihydrodipicolinate Reductase, domain 2"/>
    <property type="match status" value="1"/>
</dbReference>
<dbReference type="Gene3D" id="3.40.50.720">
    <property type="entry name" value="NAD(P)-binding Rossmann-like Domain"/>
    <property type="match status" value="1"/>
</dbReference>
<dbReference type="HAMAP" id="MF_01671">
    <property type="entry name" value="IolG"/>
    <property type="match status" value="1"/>
</dbReference>
<dbReference type="InterPro" id="IPR050424">
    <property type="entry name" value="Gfo-Idh-MocA_inositol_DH"/>
</dbReference>
<dbReference type="InterPro" id="IPR004104">
    <property type="entry name" value="Gfo/Idh/MocA-like_OxRdtase_C"/>
</dbReference>
<dbReference type="InterPro" id="IPR000683">
    <property type="entry name" value="Gfo/Idh/MocA-like_OxRdtase_N"/>
</dbReference>
<dbReference type="InterPro" id="IPR023794">
    <property type="entry name" value="MI/DCI_dehydrogenase"/>
</dbReference>
<dbReference type="InterPro" id="IPR036291">
    <property type="entry name" value="NAD(P)-bd_dom_sf"/>
</dbReference>
<dbReference type="PANTHER" id="PTHR43593">
    <property type="match status" value="1"/>
</dbReference>
<dbReference type="PANTHER" id="PTHR43593:SF1">
    <property type="entry name" value="INOSITOL 2-DEHYDROGENASE"/>
    <property type="match status" value="1"/>
</dbReference>
<dbReference type="Pfam" id="PF01408">
    <property type="entry name" value="GFO_IDH_MocA"/>
    <property type="match status" value="1"/>
</dbReference>
<dbReference type="Pfam" id="PF02894">
    <property type="entry name" value="GFO_IDH_MocA_C"/>
    <property type="match status" value="1"/>
</dbReference>
<dbReference type="SUPFAM" id="SSF55347">
    <property type="entry name" value="Glyceraldehyde-3-phosphate dehydrogenase-like, C-terminal domain"/>
    <property type="match status" value="1"/>
</dbReference>
<dbReference type="SUPFAM" id="SSF51735">
    <property type="entry name" value="NAD(P)-binding Rossmann-fold domains"/>
    <property type="match status" value="1"/>
</dbReference>
<comment type="function">
    <text evidence="1">Involved in the oxidation of myo-inositol (MI) and D-chiro-inositol (DCI) to 2-keto-myo-inositol (2KMI or 2-inosose) and 1-keto-D-chiro-inositol (1KDCI), respectively.</text>
</comment>
<comment type="catalytic activity">
    <reaction evidence="1">
        <text>myo-inositol + NAD(+) = scyllo-inosose + NADH + H(+)</text>
        <dbReference type="Rhea" id="RHEA:16949"/>
        <dbReference type="ChEBI" id="CHEBI:15378"/>
        <dbReference type="ChEBI" id="CHEBI:17268"/>
        <dbReference type="ChEBI" id="CHEBI:17811"/>
        <dbReference type="ChEBI" id="CHEBI:57540"/>
        <dbReference type="ChEBI" id="CHEBI:57945"/>
        <dbReference type="EC" id="1.1.1.18"/>
    </reaction>
</comment>
<comment type="catalytic activity">
    <reaction evidence="1">
        <text>1D-chiro-inositol + NAD(+) = scyllo-inosine + NADH + H(+)</text>
        <dbReference type="Rhea" id="RHEA:25832"/>
        <dbReference type="ChEBI" id="CHEBI:15378"/>
        <dbReference type="ChEBI" id="CHEBI:27372"/>
        <dbReference type="ChEBI" id="CHEBI:50920"/>
        <dbReference type="ChEBI" id="CHEBI:57540"/>
        <dbReference type="ChEBI" id="CHEBI:57945"/>
        <dbReference type="EC" id="1.1.1.369"/>
    </reaction>
</comment>
<comment type="pathway">
    <text evidence="1">Polyol metabolism; myo-inositol degradation into acetyl-CoA; acetyl-CoA from myo-inositol: step 1/7.</text>
</comment>
<comment type="subunit">
    <text evidence="1">Homotetramer.</text>
</comment>
<comment type="similarity">
    <text evidence="1">Belongs to the Gfo/Idh/MocA family.</text>
</comment>
<keyword id="KW-0520">NAD</keyword>
<keyword id="KW-0560">Oxidoreductase</keyword>
<keyword id="KW-1185">Reference proteome</keyword>
<accession>Q65D06</accession>
<accession>Q62NI2</accession>
<sequence length="344" mass="38134">MKLRIGVIGTGAIGKEHINRITNKLAGGEIVAVTDVNQEAAQQVVTDYSLNAKVYPDDDSLIAAENVDAVLVTSWGPAHESSVLKAIKANKFVFCEKPLATTAEGCMRIVNEEVKAGKRLVQVGFMRRYDSGYVQLKEAIDNRVIGEPLMIHCAHRNPVVGDNYTTDMAVVDTLVHEIDALHWLINDDYESVQVIYPKKSKNALPHLRDPQIVIIETKGGVVINAEIYVNCKYGYDIQCEIVGEDGIVKLPEPSSISLRKDGKFSTDILMDWQRRFVDAYDVEIQDFIDSIQQKGEVSGPTAWDGYIAAVTTDACVKAQESGQKEPVALQEKPEFYQTFTTVKK</sequence>
<gene>
    <name evidence="1" type="primary">iolG</name>
    <name type="ordered locus">BLi04245</name>
    <name type="ordered locus">BL00240</name>
</gene>
<organism>
    <name type="scientific">Bacillus licheniformis (strain ATCC 14580 / DSM 13 / JCM 2505 / CCUG 7422 / NBRC 12200 / NCIMB 9375 / NCTC 10341 / NRRL NRS-1264 / Gibson 46)</name>
    <dbReference type="NCBI Taxonomy" id="279010"/>
    <lineage>
        <taxon>Bacteria</taxon>
        <taxon>Bacillati</taxon>
        <taxon>Bacillota</taxon>
        <taxon>Bacilli</taxon>
        <taxon>Bacillales</taxon>
        <taxon>Bacillaceae</taxon>
        <taxon>Bacillus</taxon>
    </lineage>
</organism>
<feature type="chain" id="PRO_0000352557" description="Inositol 2-dehydrogenase/D-chiro-inositol 3-dehydrogenase">
    <location>
        <begin position="1"/>
        <end position="344"/>
    </location>
</feature>
<name>IOLG_BACLD</name>